<sequence length="411" mass="46237">MRAERTSFLLALGLLVAGIRSVHCLPENVVVKDQHRRVDGHTLASSNTDFAFSLYKQLALKNPNKNVILSPLSVSIALAFLSLGARGSTLTEILEGLKFNLTEIQEKEIHHSFQHLLQALNQPSNQLQLSVGNAMFVQEELKLLDKFIEDAQVLYSSEAFPTNFRDSEAARSLINDYVKNKTQGKIEELFKYLSPRTELVLVNYIYFKAQWKTPFDPKHTEQAEFHVSDNKTVEVPMMTLDLETPYFRDEELGCTLVELTYTSNDSALFILPDEGKMRDLEAKLTPETLTRWRNSLQPRRIHELYLPKFSIKSNYELNDILSQLGIRKIFANADLSGITGTADLVVSQVVHGAALDVDEEGTEGAAATGISMERTILRIIVRVNRPFLIAIVLKDTQSIIFLGKVTNPSEA</sequence>
<protein>
    <recommendedName>
        <fullName evidence="8">Serpin A3-1</fullName>
    </recommendedName>
    <alternativeName>
        <fullName evidence="6 7 10">Endopin-1A</fullName>
    </alternativeName>
    <alternativeName>
        <fullName evidence="6 7 10">Muscle endopin-1A</fullName>
        <shortName evidence="6 7 10">mEndopin-1A</shortName>
    </alternativeName>
</protein>
<evidence type="ECO:0000250" key="1"/>
<evidence type="ECO:0000255" key="2"/>
<evidence type="ECO:0000269" key="3">
    <source>
    </source>
</evidence>
<evidence type="ECO:0000269" key="4">
    <source>
    </source>
</evidence>
<evidence type="ECO:0000269" key="5">
    <source>
    </source>
</evidence>
<evidence type="ECO:0000303" key="6">
    <source>
    </source>
</evidence>
<evidence type="ECO:0000303" key="7">
    <source>
    </source>
</evidence>
<evidence type="ECO:0000303" key="8">
    <source>
    </source>
</evidence>
<evidence type="ECO:0000305" key="9"/>
<evidence type="ECO:0000312" key="10">
    <source>
        <dbReference type="EMBL" id="AAF23888.2"/>
    </source>
</evidence>
<accession>Q9TTE1</accession>
<accession>Q2KIQ9</accession>
<accession>Q3ZEJ7</accession>
<dbReference type="EMBL" id="AF125526">
    <property type="protein sequence ID" value="AAF23888.2"/>
    <property type="molecule type" value="mRNA"/>
</dbReference>
<dbReference type="EMBL" id="AY911536">
    <property type="protein sequence ID" value="AAY22405.2"/>
    <property type="molecule type" value="Genomic_DNA"/>
</dbReference>
<dbReference type="EMBL" id="BC112546">
    <property type="protein sequence ID" value="AAI12547.1"/>
    <property type="molecule type" value="mRNA"/>
</dbReference>
<dbReference type="RefSeq" id="NP_777193.2">
    <property type="nucleotide sequence ID" value="NM_174768.2"/>
</dbReference>
<dbReference type="SMR" id="Q9TTE1"/>
<dbReference type="FunCoup" id="Q9TTE1">
    <property type="interactions" value="125"/>
</dbReference>
<dbReference type="IntAct" id="Q9TTE1">
    <property type="interactions" value="2"/>
</dbReference>
<dbReference type="MINT" id="Q9TTE1"/>
<dbReference type="STRING" id="9913.ENSBTAP00000054846"/>
<dbReference type="MEROPS" id="I04.027"/>
<dbReference type="GlyCosmos" id="Q9TTE1">
    <property type="glycosylation" value="4 sites, No reported glycans"/>
</dbReference>
<dbReference type="GlyGen" id="Q9TTE1">
    <property type="glycosylation" value="4 sites"/>
</dbReference>
<dbReference type="PaxDb" id="9913-ENSBTAP00000042480"/>
<dbReference type="GeneID" id="286804"/>
<dbReference type="CTD" id="286804"/>
<dbReference type="eggNOG" id="KOG2392">
    <property type="taxonomic scope" value="Eukaryota"/>
</dbReference>
<dbReference type="HOGENOM" id="CLU_023330_2_1_1"/>
<dbReference type="InParanoid" id="Q9TTE1"/>
<dbReference type="OrthoDB" id="671595at2759"/>
<dbReference type="TreeFam" id="TF343201"/>
<dbReference type="SABIO-RK" id="Q9TTE1"/>
<dbReference type="Proteomes" id="UP000009136">
    <property type="component" value="Unplaced"/>
</dbReference>
<dbReference type="GO" id="GO:0042583">
    <property type="term" value="C:chromaffin granule"/>
    <property type="evidence" value="ECO:0007669"/>
    <property type="project" value="UniProtKB-SubCell"/>
</dbReference>
<dbReference type="GO" id="GO:0005737">
    <property type="term" value="C:cytoplasm"/>
    <property type="evidence" value="ECO:0000314"/>
    <property type="project" value="UniProtKB"/>
</dbReference>
<dbReference type="GO" id="GO:0031410">
    <property type="term" value="C:cytoplasmic vesicle"/>
    <property type="evidence" value="ECO:0000314"/>
    <property type="project" value="UniProtKB"/>
</dbReference>
<dbReference type="GO" id="GO:0005615">
    <property type="term" value="C:extracellular space"/>
    <property type="evidence" value="ECO:0000314"/>
    <property type="project" value="UniProtKB"/>
</dbReference>
<dbReference type="GO" id="GO:0004869">
    <property type="term" value="F:cysteine-type endopeptidase inhibitor activity"/>
    <property type="evidence" value="ECO:0000314"/>
    <property type="project" value="UniProtKB"/>
</dbReference>
<dbReference type="GO" id="GO:0004867">
    <property type="term" value="F:serine-type endopeptidase inhibitor activity"/>
    <property type="evidence" value="ECO:0000314"/>
    <property type="project" value="UniProtKB"/>
</dbReference>
<dbReference type="CDD" id="cd19551">
    <property type="entry name" value="serpinA3_A1AC"/>
    <property type="match status" value="1"/>
</dbReference>
<dbReference type="FunFam" id="3.30.497.10:FF:000001">
    <property type="entry name" value="Serine protease inhibitor"/>
    <property type="match status" value="1"/>
</dbReference>
<dbReference type="FunFam" id="2.30.39.10:FF:000002">
    <property type="entry name" value="Serpin family D member 1"/>
    <property type="match status" value="1"/>
</dbReference>
<dbReference type="Gene3D" id="2.30.39.10">
    <property type="entry name" value="Alpha-1-antitrypsin, domain 1"/>
    <property type="match status" value="1"/>
</dbReference>
<dbReference type="Gene3D" id="3.30.497.10">
    <property type="entry name" value="Antithrombin, subunit I, domain 2"/>
    <property type="match status" value="1"/>
</dbReference>
<dbReference type="InterPro" id="IPR023795">
    <property type="entry name" value="Serpin_CS"/>
</dbReference>
<dbReference type="InterPro" id="IPR023796">
    <property type="entry name" value="Serpin_dom"/>
</dbReference>
<dbReference type="InterPro" id="IPR000215">
    <property type="entry name" value="Serpin_fam"/>
</dbReference>
<dbReference type="InterPro" id="IPR036186">
    <property type="entry name" value="Serpin_sf"/>
</dbReference>
<dbReference type="InterPro" id="IPR042178">
    <property type="entry name" value="Serpin_sf_1"/>
</dbReference>
<dbReference type="InterPro" id="IPR042185">
    <property type="entry name" value="Serpin_sf_2"/>
</dbReference>
<dbReference type="PANTHER" id="PTHR11461:SF145">
    <property type="entry name" value="ALPHA-1-ANTICHYMOTRYPSIN"/>
    <property type="match status" value="1"/>
</dbReference>
<dbReference type="PANTHER" id="PTHR11461">
    <property type="entry name" value="SERINE PROTEASE INHIBITOR, SERPIN"/>
    <property type="match status" value="1"/>
</dbReference>
<dbReference type="Pfam" id="PF00079">
    <property type="entry name" value="Serpin"/>
    <property type="match status" value="1"/>
</dbReference>
<dbReference type="SMART" id="SM00093">
    <property type="entry name" value="SERPIN"/>
    <property type="match status" value="1"/>
</dbReference>
<dbReference type="SUPFAM" id="SSF56574">
    <property type="entry name" value="Serpins"/>
    <property type="match status" value="1"/>
</dbReference>
<dbReference type="PROSITE" id="PS00284">
    <property type="entry name" value="SERPIN"/>
    <property type="match status" value="1"/>
</dbReference>
<feature type="signal peptide" evidence="4 5">
    <location>
        <begin position="1"/>
        <end position="24"/>
    </location>
</feature>
<feature type="chain" id="PRO_0000229752" description="Serpin A3-1" evidence="4">
    <location>
        <begin position="25"/>
        <end position="411"/>
    </location>
</feature>
<feature type="site" description="Reactive bond" evidence="1">
    <location>
        <begin position="377"/>
        <end position="378"/>
    </location>
</feature>
<feature type="glycosylation site" description="N-linked (GlcNAc...) asparagine" evidence="2">
    <location>
        <position position="100"/>
    </location>
</feature>
<feature type="glycosylation site" description="N-linked (GlcNAc...) asparagine" evidence="2">
    <location>
        <position position="180"/>
    </location>
</feature>
<feature type="glycosylation site" description="N-linked (GlcNAc...) asparagine" evidence="2">
    <location>
        <position position="230"/>
    </location>
</feature>
<feature type="glycosylation site" description="N-linked (GlcNAc...) asparagine" evidence="2">
    <location>
        <position position="264"/>
    </location>
</feature>
<feature type="sequence conflict" description="In Ref. 1; AAF23888." evidence="9" ref="1">
    <original>R</original>
    <variation>P</variation>
    <location>
        <position position="20"/>
    </location>
</feature>
<feature type="sequence conflict" description="In Ref. 1; AAF23888." evidence="9" ref="1">
    <original>A</original>
    <variation>P</variation>
    <location>
        <position position="59"/>
    </location>
</feature>
<keyword id="KW-0968">Cytoplasmic vesicle</keyword>
<keyword id="KW-0903">Direct protein sequencing</keyword>
<keyword id="KW-0325">Glycoprotein</keyword>
<keyword id="KW-0646">Protease inhibitor</keyword>
<keyword id="KW-1185">Reference proteome</keyword>
<keyword id="KW-0964">Secreted</keyword>
<keyword id="KW-0722">Serine protease inhibitor</keyword>
<keyword id="KW-0732">Signal</keyword>
<organism>
    <name type="scientific">Bos taurus</name>
    <name type="common">Bovine</name>
    <dbReference type="NCBI Taxonomy" id="9913"/>
    <lineage>
        <taxon>Eukaryota</taxon>
        <taxon>Metazoa</taxon>
        <taxon>Chordata</taxon>
        <taxon>Craniata</taxon>
        <taxon>Vertebrata</taxon>
        <taxon>Euteleostomi</taxon>
        <taxon>Mammalia</taxon>
        <taxon>Eutheria</taxon>
        <taxon>Laurasiatheria</taxon>
        <taxon>Artiodactyla</taxon>
        <taxon>Ruminantia</taxon>
        <taxon>Pecora</taxon>
        <taxon>Bovidae</taxon>
        <taxon>Bovinae</taxon>
        <taxon>Bos</taxon>
    </lineage>
</organism>
<gene>
    <name evidence="8" type="primary">SERPINA3-1</name>
    <name type="synonym">SERPINA3A</name>
</gene>
<name>SPA31_BOVIN</name>
<reference evidence="9 10" key="1">
    <citation type="journal article" date="1999" name="J. Biol. Chem.">
        <title>Molecular cloning of endopin 1, a novel serpin localized to neurosecretory vesicles of chromaffin cells. Inhibition of basic residue-cleaving proteases by endopin 1.</title>
        <authorList>
            <person name="Hwang S.-R."/>
            <person name="Steineckert B."/>
            <person name="Yasothornsrikul S."/>
            <person name="Sei C.A."/>
            <person name="Toneff T."/>
            <person name="Rattan J."/>
            <person name="Hook V.Y.H."/>
        </authorList>
    </citation>
    <scope>NUCLEOTIDE SEQUENCE [MRNA]</scope>
    <scope>FUNCTION</scope>
    <scope>SUBCELLULAR LOCATION</scope>
    <scope>TISSUE SPECIFICITY</scope>
    <scope>GLYCOSYLATION</scope>
    <source>
        <tissue evidence="3">Adrenal medulla</tissue>
    </source>
</reference>
<reference evidence="9 10" key="2">
    <citation type="submission" date="2003-01" db="EMBL/GenBank/DDBJ databases">
        <authorList>
            <person name="Hwang S.-R."/>
            <person name="Steineckert B."/>
            <person name="Yasothornsrikul S."/>
            <person name="Sei C.A."/>
            <person name="Toneff T."/>
            <person name="Rattan J."/>
            <person name="Kang Y.-H."/>
            <person name="Hook V.Y.H."/>
        </authorList>
    </citation>
    <scope>SEQUENCE REVISION TO 113-152</scope>
    <source>
        <tissue evidence="3">Adrenal medulla</tissue>
    </source>
</reference>
<reference evidence="9" key="3">
    <citation type="journal article" date="2006" name="FEBS Lett.">
        <title>Purification of the skeletal muscle protein endopin 1B and characterization of the genes encoding endopin 1A and 1B isoforms.</title>
        <authorList>
            <person name="Herrera-Mendez C.H."/>
            <person name="Bremaud L."/>
            <person name="Coulis G."/>
            <person name="Pelissier P."/>
            <person name="Sentandreu M.A."/>
            <person name="Aubry L."/>
            <person name="Delourme D."/>
            <person name="Chambon C."/>
            <person name="Maftah A."/>
            <person name="Leveziel H."/>
            <person name="Ouali A."/>
        </authorList>
    </citation>
    <scope>NUCLEOTIDE SEQUENCE [GENOMIC DNA]</scope>
    <scope>PROTEIN SEQUENCE OF 25-38 AND 313-327</scope>
    <scope>SUBUNIT</scope>
    <source>
        <tissue evidence="5">Muscle</tissue>
    </source>
</reference>
<reference evidence="9 10" key="4">
    <citation type="submission" date="2006-01" db="EMBL/GenBank/DDBJ databases">
        <authorList>
            <consortium name="NIH - Mammalian Gene Collection (MGC) project"/>
        </authorList>
    </citation>
    <scope>NUCLEOTIDE SEQUENCE [LARGE SCALE MRNA]</scope>
    <source>
        <strain>Hereford</strain>
        <tissue>Testis</tissue>
    </source>
</reference>
<reference evidence="9" key="5">
    <citation type="journal article" date="2005" name="Biochem. J.">
        <title>Muscle endopin 1, a muscle intracellular serpin inhibiting strongly elastase: purification, characterization, cellular localization and tissue distribution.</title>
        <authorList>
            <person name="Tassy C."/>
            <person name="Herrera-Mendez C.H."/>
            <person name="Sentandreu M.A."/>
            <person name="Aubry L."/>
            <person name="Bremaud L."/>
            <person name="Pelissier P."/>
            <person name="Delourme D."/>
            <person name="Brillard M."/>
            <person name="Gauthier F."/>
            <person name="Leveziel H."/>
            <person name="Ouali A."/>
        </authorList>
    </citation>
    <scope>PROTEIN SEQUENCE OF 25-38 AND 313-327</scope>
    <scope>FUNCTION</scope>
    <scope>BIOPHYSICOCHEMICAL PROPERTIES</scope>
    <scope>SUBCELLULAR LOCATION</scope>
    <scope>TISSUE SPECIFICITY</scope>
    <source>
        <tissue evidence="4">Diaphragm</tissue>
    </source>
</reference>
<reference key="6">
    <citation type="journal article" date="2008" name="BMC Genomics">
        <title>An original SERPINA3 gene cluster: elucidation of genomic organization and gene expression in the Bos taurus 21q24 region.</title>
        <authorList>
            <person name="Pelissier P."/>
            <person name="Delourme D."/>
            <person name="Germot A."/>
            <person name="Blanchet X."/>
            <person name="Becila S."/>
            <person name="Maftah A."/>
            <person name="Leveziel H."/>
            <person name="Ouali A."/>
            <person name="Bremaud L."/>
        </authorList>
    </citation>
    <scope>NOMENCLATURE</scope>
</reference>
<comment type="function">
    <text evidence="3 4">Potent inhibitor of the serine proteases elastase and trypsin. Moderately inhibits the serine proteases plasmin and chymotrypsin, and the thiol protease proenkephalin-processing enzyme. Does not inhibit the serine proteases cathepsin G, furin, kallikrein, thrombin, tissue plasminogen activator and urokinase, or the cysteine proteases cathepsin B, cathepsin L and papain.</text>
</comment>
<comment type="biophysicochemical properties">
    <phDependence>
        <text evidence="4">Stable in the pH range 4.0-12.0. Incubation at a pH below 4.0 rapidly decreases inhibitory activity.</text>
    </phDependence>
    <temperatureDependence>
        <text evidence="4">Stable at temperatures up to 70 degrees Celsius. Incubation at temperatures above 70 degrees Celsius rapidly decreases inhibitory activity.</text>
    </temperatureDependence>
</comment>
<comment type="subunit">
    <text evidence="5">Homodimer.</text>
</comment>
<comment type="subcellular location">
    <subcellularLocation>
        <location evidence="3 4">Cytoplasmic vesicle</location>
        <location evidence="3 4">Secretory vesicle</location>
        <location evidence="3 4">Chromaffin granule</location>
    </subcellularLocation>
    <subcellularLocation>
        <location evidence="3 4">Secreted</location>
    </subcellularLocation>
    <text evidence="3 4">In longissimus muscle myocytes highest levels are found between the plasma membrane and the myofibrils and lower levels are found within the myofibrils. Localized to the chromaffin granules of the adrenal medulla and secreted in response to nicotine or KCL depolarization.</text>
</comment>
<comment type="tissue specificity">
    <text evidence="3 4">Detected in all tissues examined (at protein level). Abundantly expressed in liver, kidney and spleen. Lowest levels were observed in diaphragm muscle.</text>
</comment>
<comment type="PTM">
    <text evidence="3">N-glycosylated.</text>
</comment>
<comment type="similarity">
    <text evidence="2">Belongs to the serpin family.</text>
</comment>
<proteinExistence type="evidence at protein level"/>